<evidence type="ECO:0000255" key="1">
    <source>
        <dbReference type="HAMAP-Rule" id="MF_00435"/>
    </source>
</evidence>
<evidence type="ECO:0000255" key="2">
    <source>
        <dbReference type="PROSITE-ProRule" id="PRU01197"/>
    </source>
</evidence>
<evidence type="ECO:0000255" key="3">
    <source>
        <dbReference type="PROSITE-ProRule" id="PRU01198"/>
    </source>
</evidence>
<proteinExistence type="inferred from homology"/>
<dbReference type="EC" id="1.1.1.86" evidence="1"/>
<dbReference type="EMBL" id="CP000026">
    <property type="protein sequence ID" value="AAV79531.1"/>
    <property type="molecule type" value="Genomic_DNA"/>
</dbReference>
<dbReference type="RefSeq" id="WP_000024943.1">
    <property type="nucleotide sequence ID" value="NC_006511.1"/>
</dbReference>
<dbReference type="SMR" id="Q5PJZ5"/>
<dbReference type="KEGG" id="spt:SPA3748"/>
<dbReference type="HOGENOM" id="CLU_551905_0_0_6"/>
<dbReference type="UniPathway" id="UPA00047">
    <property type="reaction ID" value="UER00056"/>
</dbReference>
<dbReference type="UniPathway" id="UPA00049">
    <property type="reaction ID" value="UER00060"/>
</dbReference>
<dbReference type="Proteomes" id="UP000008185">
    <property type="component" value="Chromosome"/>
</dbReference>
<dbReference type="GO" id="GO:0005829">
    <property type="term" value="C:cytosol"/>
    <property type="evidence" value="ECO:0007669"/>
    <property type="project" value="TreeGrafter"/>
</dbReference>
<dbReference type="GO" id="GO:0004455">
    <property type="term" value="F:ketol-acid reductoisomerase activity"/>
    <property type="evidence" value="ECO:0007669"/>
    <property type="project" value="UniProtKB-UniRule"/>
</dbReference>
<dbReference type="GO" id="GO:0000287">
    <property type="term" value="F:magnesium ion binding"/>
    <property type="evidence" value="ECO:0007669"/>
    <property type="project" value="UniProtKB-UniRule"/>
</dbReference>
<dbReference type="GO" id="GO:0009097">
    <property type="term" value="P:isoleucine biosynthetic process"/>
    <property type="evidence" value="ECO:0007669"/>
    <property type="project" value="UniProtKB-UniRule"/>
</dbReference>
<dbReference type="GO" id="GO:0009099">
    <property type="term" value="P:L-valine biosynthetic process"/>
    <property type="evidence" value="ECO:0007669"/>
    <property type="project" value="UniProtKB-UniRule"/>
</dbReference>
<dbReference type="FunFam" id="1.10.1040.10:FF:000007">
    <property type="entry name" value="Ketol-acid reductoisomerase (NADP(+))"/>
    <property type="match status" value="1"/>
</dbReference>
<dbReference type="FunFam" id="3.40.50.720:FF:000043">
    <property type="entry name" value="Ketol-acid reductoisomerase (NADP(+))"/>
    <property type="match status" value="1"/>
</dbReference>
<dbReference type="Gene3D" id="1.10.1040.10">
    <property type="entry name" value="N-(1-d-carboxylethyl)-l-norvaline Dehydrogenase, domain 2"/>
    <property type="match status" value="1"/>
</dbReference>
<dbReference type="Gene3D" id="3.40.50.720">
    <property type="entry name" value="NAD(P)-binding Rossmann-like Domain"/>
    <property type="match status" value="1"/>
</dbReference>
<dbReference type="HAMAP" id="MF_00435">
    <property type="entry name" value="IlvC"/>
    <property type="match status" value="1"/>
</dbReference>
<dbReference type="InterPro" id="IPR008927">
    <property type="entry name" value="6-PGluconate_DH-like_C_sf"/>
</dbReference>
<dbReference type="InterPro" id="IPR013328">
    <property type="entry name" value="6PGD_dom2"/>
</dbReference>
<dbReference type="InterPro" id="IPR013023">
    <property type="entry name" value="KARI"/>
</dbReference>
<dbReference type="InterPro" id="IPR000506">
    <property type="entry name" value="KARI_C"/>
</dbReference>
<dbReference type="InterPro" id="IPR013116">
    <property type="entry name" value="KARI_N"/>
</dbReference>
<dbReference type="InterPro" id="IPR036291">
    <property type="entry name" value="NAD(P)-bd_dom_sf"/>
</dbReference>
<dbReference type="NCBIfam" id="TIGR00465">
    <property type="entry name" value="ilvC"/>
    <property type="match status" value="1"/>
</dbReference>
<dbReference type="NCBIfam" id="NF003557">
    <property type="entry name" value="PRK05225.1"/>
    <property type="match status" value="1"/>
</dbReference>
<dbReference type="PANTHER" id="PTHR21371">
    <property type="entry name" value="KETOL-ACID REDUCTOISOMERASE, MITOCHONDRIAL"/>
    <property type="match status" value="1"/>
</dbReference>
<dbReference type="PANTHER" id="PTHR21371:SF1">
    <property type="entry name" value="KETOL-ACID REDUCTOISOMERASE, MITOCHONDRIAL"/>
    <property type="match status" value="1"/>
</dbReference>
<dbReference type="Pfam" id="PF01450">
    <property type="entry name" value="KARI_C"/>
    <property type="match status" value="2"/>
</dbReference>
<dbReference type="Pfam" id="PF07991">
    <property type="entry name" value="KARI_N"/>
    <property type="match status" value="1"/>
</dbReference>
<dbReference type="SUPFAM" id="SSF48179">
    <property type="entry name" value="6-phosphogluconate dehydrogenase C-terminal domain-like"/>
    <property type="match status" value="2"/>
</dbReference>
<dbReference type="SUPFAM" id="SSF51735">
    <property type="entry name" value="NAD(P)-binding Rossmann-fold domains"/>
    <property type="match status" value="1"/>
</dbReference>
<dbReference type="PROSITE" id="PS51851">
    <property type="entry name" value="KARI_C"/>
    <property type="match status" value="2"/>
</dbReference>
<dbReference type="PROSITE" id="PS51850">
    <property type="entry name" value="KARI_N"/>
    <property type="match status" value="1"/>
</dbReference>
<name>ILVC_SALPA</name>
<protein>
    <recommendedName>
        <fullName evidence="1">Ketol-acid reductoisomerase (NADP(+))</fullName>
        <shortName evidence="1">KARI</shortName>
        <ecNumber evidence="1">1.1.1.86</ecNumber>
    </recommendedName>
    <alternativeName>
        <fullName evidence="1">Acetohydroxy-acid isomeroreductase</fullName>
        <shortName evidence="1">AHIR</shortName>
    </alternativeName>
    <alternativeName>
        <fullName evidence="1">Alpha-keto-beta-hydroxylacyl reductoisomerase</fullName>
    </alternativeName>
    <alternativeName>
        <fullName evidence="1">Ketol-acid reductoisomerase type 2</fullName>
    </alternativeName>
    <alternativeName>
        <fullName evidence="1">Ketol-acid reductoisomerase type II</fullName>
    </alternativeName>
</protein>
<feature type="chain" id="PRO_0000226198" description="Ketol-acid reductoisomerase (NADP(+))">
    <location>
        <begin position="1"/>
        <end position="491"/>
    </location>
</feature>
<feature type="domain" description="KARI N-terminal Rossmann" evidence="2">
    <location>
        <begin position="15"/>
        <end position="208"/>
    </location>
</feature>
<feature type="domain" description="KARI C-terminal knotted 1" evidence="3">
    <location>
        <begin position="209"/>
        <end position="344"/>
    </location>
</feature>
<feature type="domain" description="KARI C-terminal knotted 2" evidence="3">
    <location>
        <begin position="345"/>
        <end position="484"/>
    </location>
</feature>
<feature type="active site" evidence="1">
    <location>
        <position position="132"/>
    </location>
</feature>
<feature type="binding site" evidence="1">
    <location>
        <begin position="45"/>
        <end position="48"/>
    </location>
    <ligand>
        <name>NADP(+)</name>
        <dbReference type="ChEBI" id="CHEBI:58349"/>
    </ligand>
</feature>
<feature type="binding site" evidence="1">
    <location>
        <position position="68"/>
    </location>
    <ligand>
        <name>NADP(+)</name>
        <dbReference type="ChEBI" id="CHEBI:58349"/>
    </ligand>
</feature>
<feature type="binding site" evidence="1">
    <location>
        <position position="76"/>
    </location>
    <ligand>
        <name>NADP(+)</name>
        <dbReference type="ChEBI" id="CHEBI:58349"/>
    </ligand>
</feature>
<feature type="binding site" evidence="1">
    <location>
        <position position="78"/>
    </location>
    <ligand>
        <name>NADP(+)</name>
        <dbReference type="ChEBI" id="CHEBI:58349"/>
    </ligand>
</feature>
<feature type="binding site" evidence="1">
    <location>
        <begin position="108"/>
        <end position="110"/>
    </location>
    <ligand>
        <name>NADP(+)</name>
        <dbReference type="ChEBI" id="CHEBI:58349"/>
    </ligand>
</feature>
<feature type="binding site" evidence="1">
    <location>
        <position position="158"/>
    </location>
    <ligand>
        <name>NADP(+)</name>
        <dbReference type="ChEBI" id="CHEBI:58349"/>
    </ligand>
</feature>
<feature type="binding site" evidence="1">
    <location>
        <position position="217"/>
    </location>
    <ligand>
        <name>Mg(2+)</name>
        <dbReference type="ChEBI" id="CHEBI:18420"/>
        <label>1</label>
    </ligand>
</feature>
<feature type="binding site" evidence="1">
    <location>
        <position position="217"/>
    </location>
    <ligand>
        <name>Mg(2+)</name>
        <dbReference type="ChEBI" id="CHEBI:18420"/>
        <label>2</label>
    </ligand>
</feature>
<feature type="binding site" evidence="1">
    <location>
        <position position="221"/>
    </location>
    <ligand>
        <name>Mg(2+)</name>
        <dbReference type="ChEBI" id="CHEBI:18420"/>
        <label>1</label>
    </ligand>
</feature>
<feature type="binding site" evidence="1">
    <location>
        <position position="389"/>
    </location>
    <ligand>
        <name>Mg(2+)</name>
        <dbReference type="ChEBI" id="CHEBI:18420"/>
        <label>2</label>
    </ligand>
</feature>
<feature type="binding site" evidence="1">
    <location>
        <position position="393"/>
    </location>
    <ligand>
        <name>Mg(2+)</name>
        <dbReference type="ChEBI" id="CHEBI:18420"/>
        <label>2</label>
    </ligand>
</feature>
<feature type="binding site" evidence="1">
    <location>
        <position position="414"/>
    </location>
    <ligand>
        <name>substrate</name>
    </ligand>
</feature>
<gene>
    <name evidence="1" type="primary">ilvC</name>
    <name type="ordered locus">SPA3748</name>
</gene>
<sequence length="491" mass="53926">MANYFNTLNLRQQLAQLGKCRFMGRDEFADGASYLQGKKVVIVGCGAQGLNQGLNMRDSGLDISYALRKEAIAEKRASWRKATENGFKVGTYEELIPQADLVVNLTPDKQHSDVVRSVQPLMKDGAALGYSHGFNIVEVGEQIRKDITVVMVAPKCPGTEVREEYKRGFGVPTLIAVHPENDPKGEGMAIAKAWAAATGGHRAGVLESSFVAEVKSDLMGEQTILCGMLQAGSLLCFDKLVAEGTDPAYAEKLIQFGWETITEALKQGGITLMMDRLSNPAKLRAYALSEQLKEIMAPLFQKHMDDIISGEFSSGMMADWANDDKKLLTWREETGKTAFETAPQFEGKIGEQEYFDKGVLMIAMVKAGVELAFETMVDSGIIEESAYYESLHELPLIANTIARKRLYEMNVVISDTAEYGNYLFSYACVPLLKPFMAELQPGDLGSAIPEGAVDNAQLRDVNDAIRSHAIEQVGKKLRGYMTDMKRIAVAG</sequence>
<keyword id="KW-0028">Amino-acid biosynthesis</keyword>
<keyword id="KW-0100">Branched-chain amino acid biosynthesis</keyword>
<keyword id="KW-0460">Magnesium</keyword>
<keyword id="KW-0479">Metal-binding</keyword>
<keyword id="KW-0521">NADP</keyword>
<keyword id="KW-0560">Oxidoreductase</keyword>
<keyword id="KW-0677">Repeat</keyword>
<reference key="1">
    <citation type="journal article" date="2004" name="Nat. Genet.">
        <title>Comparison of genome degradation in Paratyphi A and Typhi, human-restricted serovars of Salmonella enterica that cause typhoid.</title>
        <authorList>
            <person name="McClelland M."/>
            <person name="Sanderson K.E."/>
            <person name="Clifton S.W."/>
            <person name="Latreille P."/>
            <person name="Porwollik S."/>
            <person name="Sabo A."/>
            <person name="Meyer R."/>
            <person name="Bieri T."/>
            <person name="Ozersky P."/>
            <person name="McLellan M."/>
            <person name="Harkins C.R."/>
            <person name="Wang C."/>
            <person name="Nguyen C."/>
            <person name="Berghoff A."/>
            <person name="Elliott G."/>
            <person name="Kohlberg S."/>
            <person name="Strong C."/>
            <person name="Du F."/>
            <person name="Carter J."/>
            <person name="Kremizki C."/>
            <person name="Layman D."/>
            <person name="Leonard S."/>
            <person name="Sun H."/>
            <person name="Fulton L."/>
            <person name="Nash W."/>
            <person name="Miner T."/>
            <person name="Minx P."/>
            <person name="Delehaunty K."/>
            <person name="Fronick C."/>
            <person name="Magrini V."/>
            <person name="Nhan M."/>
            <person name="Warren W."/>
            <person name="Florea L."/>
            <person name="Spieth J."/>
            <person name="Wilson R.K."/>
        </authorList>
    </citation>
    <scope>NUCLEOTIDE SEQUENCE [LARGE SCALE GENOMIC DNA]</scope>
    <source>
        <strain>ATCC 9150 / SARB42</strain>
    </source>
</reference>
<organism>
    <name type="scientific">Salmonella paratyphi A (strain ATCC 9150 / SARB42)</name>
    <dbReference type="NCBI Taxonomy" id="295319"/>
    <lineage>
        <taxon>Bacteria</taxon>
        <taxon>Pseudomonadati</taxon>
        <taxon>Pseudomonadota</taxon>
        <taxon>Gammaproteobacteria</taxon>
        <taxon>Enterobacterales</taxon>
        <taxon>Enterobacteriaceae</taxon>
        <taxon>Salmonella</taxon>
    </lineage>
</organism>
<comment type="function">
    <text evidence="1">Involved in the biosynthesis of branched-chain amino acids (BCAA). Catalyzes an alkyl-migration followed by a ketol-acid reduction of (S)-2-acetolactate (S2AL) to yield (R)-2,3-dihydroxy-isovalerate. In the isomerase reaction, S2AL is rearranged via a Mg-dependent methyl migration to produce 3-hydroxy-3-methyl-2-ketobutyrate (HMKB). In the reductase reaction, this 2-ketoacid undergoes a metal-dependent reduction by NADPH to yield (R)-2,3-dihydroxy-isovalerate.</text>
</comment>
<comment type="catalytic activity">
    <reaction evidence="1">
        <text>(2R)-2,3-dihydroxy-3-methylbutanoate + NADP(+) = (2S)-2-acetolactate + NADPH + H(+)</text>
        <dbReference type="Rhea" id="RHEA:22068"/>
        <dbReference type="ChEBI" id="CHEBI:15378"/>
        <dbReference type="ChEBI" id="CHEBI:49072"/>
        <dbReference type="ChEBI" id="CHEBI:57783"/>
        <dbReference type="ChEBI" id="CHEBI:58349"/>
        <dbReference type="ChEBI" id="CHEBI:58476"/>
        <dbReference type="EC" id="1.1.1.86"/>
    </reaction>
</comment>
<comment type="catalytic activity">
    <reaction evidence="1">
        <text>(2R,3R)-2,3-dihydroxy-3-methylpentanoate + NADP(+) = (S)-2-ethyl-2-hydroxy-3-oxobutanoate + NADPH + H(+)</text>
        <dbReference type="Rhea" id="RHEA:13493"/>
        <dbReference type="ChEBI" id="CHEBI:15378"/>
        <dbReference type="ChEBI" id="CHEBI:49256"/>
        <dbReference type="ChEBI" id="CHEBI:49258"/>
        <dbReference type="ChEBI" id="CHEBI:57783"/>
        <dbReference type="ChEBI" id="CHEBI:58349"/>
        <dbReference type="EC" id="1.1.1.86"/>
    </reaction>
</comment>
<comment type="cofactor">
    <cofactor evidence="1">
        <name>Mg(2+)</name>
        <dbReference type="ChEBI" id="CHEBI:18420"/>
    </cofactor>
    <text evidence="1">Binds 2 magnesium ions per subunit.</text>
</comment>
<comment type="pathway">
    <text evidence="1">Amino-acid biosynthesis; L-isoleucine biosynthesis; L-isoleucine from 2-oxobutanoate: step 2/4.</text>
</comment>
<comment type="pathway">
    <text evidence="1">Amino-acid biosynthesis; L-valine biosynthesis; L-valine from pyruvate: step 2/4.</text>
</comment>
<comment type="similarity">
    <text evidence="1">Belongs to the ketol-acid reductoisomerase family.</text>
</comment>
<accession>Q5PJZ5</accession>